<keyword id="KW-0012">Acyltransferase</keyword>
<keyword id="KW-0028">Amino-acid biosynthesis</keyword>
<keyword id="KW-0963">Cytoplasm</keyword>
<keyword id="KW-0486">Methionine biosynthesis</keyword>
<keyword id="KW-1185">Reference proteome</keyword>
<keyword id="KW-0808">Transferase</keyword>
<comment type="function">
    <text evidence="1">Transfers an acetyl group from acetyl-CoA to L-homoserine, forming acetyl-L-homoserine.</text>
</comment>
<comment type="catalytic activity">
    <reaction evidence="1">
        <text>L-homoserine + acetyl-CoA = O-acetyl-L-homoserine + CoA</text>
        <dbReference type="Rhea" id="RHEA:13701"/>
        <dbReference type="ChEBI" id="CHEBI:57287"/>
        <dbReference type="ChEBI" id="CHEBI:57288"/>
        <dbReference type="ChEBI" id="CHEBI:57476"/>
        <dbReference type="ChEBI" id="CHEBI:57716"/>
        <dbReference type="EC" id="2.3.1.31"/>
    </reaction>
</comment>
<comment type="pathway">
    <text evidence="1">Amino-acid biosynthesis; L-methionine biosynthesis via de novo pathway; O-acetyl-L-homoserine from L-homoserine: step 1/1.</text>
</comment>
<comment type="subcellular location">
    <subcellularLocation>
        <location evidence="1">Cytoplasm</location>
    </subcellularLocation>
</comment>
<comment type="similarity">
    <text evidence="1">Belongs to the MetA family.</text>
</comment>
<accession>Q24NB7</accession>
<sequence length="307" mass="35854">MPINVPDGLPAAEILTKEDVFIMEEKRAEHQDIRPLSIVILNLMPNKIITETQILRLLGNSPLQVDITLLYPETHRSKNTPEEYLIKYYQTFDSIKDQKFDGMIITGAPIEQMPFEEVDFWPELQKIMDWSKANVFSTLFICWGAQAGLYHFFGVPKYPLPAKMFGVFPHTLNRRDIRLLRGFDDIFYVPHSRHTEVRKEDIVKVPELEILSESEESGVYLVGTKGGRQIFVTGHSEYDPYTLKAEYDRDISYELPINIPQNYYPGDDPRQTPVVRWRGHSNLLFANWLNYYVYQETPYNLEELGNR</sequence>
<reference key="1">
    <citation type="journal article" date="2006" name="J. Bacteriol.">
        <title>Complete genome sequence of the dehalorespiring bacterium Desulfitobacterium hafniense Y51 and comparison with Dehalococcoides ethenogenes 195.</title>
        <authorList>
            <person name="Nonaka H."/>
            <person name="Keresztes G."/>
            <person name="Shinoda Y."/>
            <person name="Ikenaga Y."/>
            <person name="Abe M."/>
            <person name="Naito K."/>
            <person name="Inatomi K."/>
            <person name="Furukawa K."/>
            <person name="Inui M."/>
            <person name="Yukawa H."/>
        </authorList>
    </citation>
    <scope>NUCLEOTIDE SEQUENCE [LARGE SCALE GENOMIC DNA]</scope>
    <source>
        <strain>Y51</strain>
    </source>
</reference>
<gene>
    <name evidence="1" type="primary">metAA</name>
    <name type="ordered locus">DSY4686</name>
</gene>
<organism>
    <name type="scientific">Desulfitobacterium hafniense (strain Y51)</name>
    <dbReference type="NCBI Taxonomy" id="138119"/>
    <lineage>
        <taxon>Bacteria</taxon>
        <taxon>Bacillati</taxon>
        <taxon>Bacillota</taxon>
        <taxon>Clostridia</taxon>
        <taxon>Eubacteriales</taxon>
        <taxon>Desulfitobacteriaceae</taxon>
        <taxon>Desulfitobacterium</taxon>
    </lineage>
</organism>
<evidence type="ECO:0000255" key="1">
    <source>
        <dbReference type="HAMAP-Rule" id="MF_00295"/>
    </source>
</evidence>
<name>METAA_DESHY</name>
<dbReference type="EC" id="2.3.1.31" evidence="1"/>
<dbReference type="EMBL" id="AP008230">
    <property type="protein sequence ID" value="BAE86475.1"/>
    <property type="molecule type" value="Genomic_DNA"/>
</dbReference>
<dbReference type="RefSeq" id="WP_011462040.1">
    <property type="nucleotide sequence ID" value="NC_007907.1"/>
</dbReference>
<dbReference type="SMR" id="Q24NB7"/>
<dbReference type="STRING" id="138119.DSY4686"/>
<dbReference type="KEGG" id="dsy:DSY4686"/>
<dbReference type="eggNOG" id="COG1897">
    <property type="taxonomic scope" value="Bacteria"/>
</dbReference>
<dbReference type="HOGENOM" id="CLU_057851_0_1_9"/>
<dbReference type="UniPathway" id="UPA00051">
    <property type="reaction ID" value="UER00074"/>
</dbReference>
<dbReference type="Proteomes" id="UP000001946">
    <property type="component" value="Chromosome"/>
</dbReference>
<dbReference type="GO" id="GO:0005737">
    <property type="term" value="C:cytoplasm"/>
    <property type="evidence" value="ECO:0007669"/>
    <property type="project" value="UniProtKB-SubCell"/>
</dbReference>
<dbReference type="GO" id="GO:0004414">
    <property type="term" value="F:homoserine O-acetyltransferase activity"/>
    <property type="evidence" value="ECO:0007669"/>
    <property type="project" value="UniProtKB-EC"/>
</dbReference>
<dbReference type="GO" id="GO:0008899">
    <property type="term" value="F:homoserine O-succinyltransferase activity"/>
    <property type="evidence" value="ECO:0007669"/>
    <property type="project" value="UniProtKB-UniRule"/>
</dbReference>
<dbReference type="GO" id="GO:0019281">
    <property type="term" value="P:L-methionine biosynthetic process from homoserine via O-succinyl-L-homoserine and cystathionine"/>
    <property type="evidence" value="ECO:0007669"/>
    <property type="project" value="InterPro"/>
</dbReference>
<dbReference type="CDD" id="cd03131">
    <property type="entry name" value="GATase1_HTS"/>
    <property type="match status" value="1"/>
</dbReference>
<dbReference type="FunFam" id="3.40.50.880:FF:000004">
    <property type="entry name" value="Homoserine O-succinyltransferase"/>
    <property type="match status" value="1"/>
</dbReference>
<dbReference type="Gene3D" id="3.40.50.880">
    <property type="match status" value="1"/>
</dbReference>
<dbReference type="HAMAP" id="MF_00295">
    <property type="entry name" value="MetA_acyltransf"/>
    <property type="match status" value="1"/>
</dbReference>
<dbReference type="InterPro" id="IPR029062">
    <property type="entry name" value="Class_I_gatase-like"/>
</dbReference>
<dbReference type="InterPro" id="IPR005697">
    <property type="entry name" value="HST_MetA"/>
</dbReference>
<dbReference type="InterPro" id="IPR033752">
    <property type="entry name" value="MetA_family"/>
</dbReference>
<dbReference type="NCBIfam" id="TIGR01001">
    <property type="entry name" value="metA"/>
    <property type="match status" value="1"/>
</dbReference>
<dbReference type="PANTHER" id="PTHR20919">
    <property type="entry name" value="HOMOSERINE O-SUCCINYLTRANSFERASE"/>
    <property type="match status" value="1"/>
</dbReference>
<dbReference type="PANTHER" id="PTHR20919:SF0">
    <property type="entry name" value="HOMOSERINE O-SUCCINYLTRANSFERASE"/>
    <property type="match status" value="1"/>
</dbReference>
<dbReference type="Pfam" id="PF04204">
    <property type="entry name" value="HTS"/>
    <property type="match status" value="1"/>
</dbReference>
<dbReference type="PIRSF" id="PIRSF000450">
    <property type="entry name" value="H_ser_succinyltr"/>
    <property type="match status" value="1"/>
</dbReference>
<dbReference type="SUPFAM" id="SSF52317">
    <property type="entry name" value="Class I glutamine amidotransferase-like"/>
    <property type="match status" value="1"/>
</dbReference>
<protein>
    <recommendedName>
        <fullName evidence="1">Homoserine O-acetyltransferase</fullName>
        <shortName evidence="1">HAT</shortName>
        <ecNumber evidence="1">2.3.1.31</ecNumber>
    </recommendedName>
    <alternativeName>
        <fullName evidence="1">Homoserine transacetylase</fullName>
        <shortName evidence="1">HTA</shortName>
    </alternativeName>
</protein>
<proteinExistence type="inferred from homology"/>
<feature type="chain" id="PRO_1000021810" description="Homoserine O-acetyltransferase">
    <location>
        <begin position="1"/>
        <end position="307"/>
    </location>
</feature>
<feature type="active site" description="Acyl-thioester intermediate" evidence="1">
    <location>
        <position position="142"/>
    </location>
</feature>
<feature type="active site" description="Proton acceptor" evidence="1">
    <location>
        <position position="235"/>
    </location>
</feature>
<feature type="active site" evidence="1">
    <location>
        <position position="237"/>
    </location>
</feature>
<feature type="binding site" evidence="1">
    <location>
        <position position="163"/>
    </location>
    <ligand>
        <name>substrate</name>
    </ligand>
</feature>
<feature type="binding site" evidence="1">
    <location>
        <position position="192"/>
    </location>
    <ligand>
        <name>substrate</name>
    </ligand>
</feature>
<feature type="binding site" evidence="1">
    <location>
        <position position="249"/>
    </location>
    <ligand>
        <name>substrate</name>
    </ligand>
</feature>
<feature type="site" description="Important for acyl-CoA specificity" evidence="1">
    <location>
        <position position="111"/>
    </location>
</feature>
<feature type="site" description="Important for substrate specificity" evidence="1">
    <location>
        <position position="192"/>
    </location>
</feature>